<dbReference type="EC" id="3.2.-.-" evidence="1"/>
<dbReference type="EMBL" id="CU928164">
    <property type="protein sequence ID" value="CAR16172.1"/>
    <property type="molecule type" value="Genomic_DNA"/>
</dbReference>
<dbReference type="RefSeq" id="WP_001239147.1">
    <property type="nucleotide sequence ID" value="NC_011750.1"/>
</dbReference>
<dbReference type="RefSeq" id="YP_002406079.1">
    <property type="nucleotide sequence ID" value="NC_011750.1"/>
</dbReference>
<dbReference type="SMR" id="B7NHD4"/>
<dbReference type="STRING" id="585057.ECIAI39_0031"/>
<dbReference type="KEGG" id="ect:ECIAI39_0031"/>
<dbReference type="PATRIC" id="fig|585057.6.peg.32"/>
<dbReference type="HOGENOM" id="CLU_036838_2_2_6"/>
<dbReference type="Proteomes" id="UP000000749">
    <property type="component" value="Chromosome"/>
</dbReference>
<dbReference type="GO" id="GO:0005829">
    <property type="term" value="C:cytosol"/>
    <property type="evidence" value="ECO:0007669"/>
    <property type="project" value="TreeGrafter"/>
</dbReference>
<dbReference type="GO" id="GO:0008477">
    <property type="term" value="F:purine nucleosidase activity"/>
    <property type="evidence" value="ECO:0007669"/>
    <property type="project" value="TreeGrafter"/>
</dbReference>
<dbReference type="GO" id="GO:0045437">
    <property type="term" value="F:uridine nucleosidase activity"/>
    <property type="evidence" value="ECO:0007669"/>
    <property type="project" value="UniProtKB-ARBA"/>
</dbReference>
<dbReference type="GO" id="GO:0006144">
    <property type="term" value="P:purine nucleobase metabolic process"/>
    <property type="evidence" value="ECO:0007669"/>
    <property type="project" value="UniProtKB-UniRule"/>
</dbReference>
<dbReference type="GO" id="GO:0006152">
    <property type="term" value="P:purine nucleoside catabolic process"/>
    <property type="evidence" value="ECO:0007669"/>
    <property type="project" value="TreeGrafter"/>
</dbReference>
<dbReference type="GO" id="GO:0006206">
    <property type="term" value="P:pyrimidine nucleobase metabolic process"/>
    <property type="evidence" value="ECO:0007669"/>
    <property type="project" value="UniProtKB-UniRule"/>
</dbReference>
<dbReference type="CDD" id="cd02651">
    <property type="entry name" value="nuc_hydro_IU_UC_XIUA"/>
    <property type="match status" value="1"/>
</dbReference>
<dbReference type="FunFam" id="3.90.245.10:FF:000002">
    <property type="entry name" value="Non-specific ribonucleoside hydrolase RihC"/>
    <property type="match status" value="1"/>
</dbReference>
<dbReference type="Gene3D" id="3.90.245.10">
    <property type="entry name" value="Ribonucleoside hydrolase-like"/>
    <property type="match status" value="1"/>
</dbReference>
<dbReference type="HAMAP" id="MF_01432">
    <property type="entry name" value="Nucleosid_hydro_RihC"/>
    <property type="match status" value="1"/>
</dbReference>
<dbReference type="InterPro" id="IPR015910">
    <property type="entry name" value="I/U_nuclsd_hydro_CS"/>
</dbReference>
<dbReference type="InterPro" id="IPR001910">
    <property type="entry name" value="Inosine/uridine_hydrolase_dom"/>
</dbReference>
<dbReference type="InterPro" id="IPR023186">
    <property type="entry name" value="IUNH"/>
</dbReference>
<dbReference type="InterPro" id="IPR022976">
    <property type="entry name" value="Nucleosid_hydro_RihC_nonspecif"/>
</dbReference>
<dbReference type="InterPro" id="IPR036452">
    <property type="entry name" value="Ribo_hydro-like"/>
</dbReference>
<dbReference type="NCBIfam" id="NF008036">
    <property type="entry name" value="PRK10768.1"/>
    <property type="match status" value="1"/>
</dbReference>
<dbReference type="PANTHER" id="PTHR12304">
    <property type="entry name" value="INOSINE-URIDINE PREFERRING NUCLEOSIDE HYDROLASE"/>
    <property type="match status" value="1"/>
</dbReference>
<dbReference type="PANTHER" id="PTHR12304:SF15">
    <property type="entry name" value="NON-SPECIFIC RIBONUCLEOSIDE HYDROLASE RIHC"/>
    <property type="match status" value="1"/>
</dbReference>
<dbReference type="Pfam" id="PF01156">
    <property type="entry name" value="IU_nuc_hydro"/>
    <property type="match status" value="1"/>
</dbReference>
<dbReference type="SUPFAM" id="SSF53590">
    <property type="entry name" value="Nucleoside hydrolase"/>
    <property type="match status" value="1"/>
</dbReference>
<dbReference type="PROSITE" id="PS01247">
    <property type="entry name" value="IUNH"/>
    <property type="match status" value="1"/>
</dbReference>
<proteinExistence type="inferred from homology"/>
<accession>B7NHD4</accession>
<evidence type="ECO:0000255" key="1">
    <source>
        <dbReference type="HAMAP-Rule" id="MF_01432"/>
    </source>
</evidence>
<name>RIHC_ECO7I</name>
<protein>
    <recommendedName>
        <fullName evidence="1">Non-specific ribonucleoside hydrolase RihC</fullName>
        <ecNumber evidence="1">3.2.-.-</ecNumber>
    </recommendedName>
    <alternativeName>
        <fullName evidence="1">Purine/pyrimidine ribonucleoside hydrolase</fullName>
    </alternativeName>
</protein>
<comment type="function">
    <text evidence="1">Hydrolyzes both purine and pyrimidine ribonucleosides with a broad-substrate specificity.</text>
</comment>
<comment type="similarity">
    <text evidence="1">Belongs to the IUNH family. RihC subfamily.</text>
</comment>
<keyword id="KW-0326">Glycosidase</keyword>
<keyword id="KW-0378">Hydrolase</keyword>
<gene>
    <name evidence="1" type="primary">rihC</name>
    <name type="ordered locus">ECIAI39_0031</name>
</gene>
<sequence>MRLPIFLDTDPGIDDAVAIAAAIFAPELDLQLMTTVAGNVSVEKTTRNALQLLHFWNAEIPLAQGAAVPLVRAPRDAASVHGESGMAGYDFVEHNRKPLGIPAFLAIRDALMRAPEPVTLVAIGPLTNIALLLSQCPECKPYIRRLVIMGGSAGRGNCTPNAEFNIAVDPEAAACVFRSGIEIVMCGLDVTNQAILTPDYLATLPELNRTGKMLHALFSHYRSGSMQSGLRMHDLCAIAWLVRPELFTLKPCFVAVETQGEFTSGTTVVDIDGCLDKPANVQVALELDVKGFQQWVAEVLALAS</sequence>
<reference key="1">
    <citation type="journal article" date="2009" name="PLoS Genet.">
        <title>Organised genome dynamics in the Escherichia coli species results in highly diverse adaptive paths.</title>
        <authorList>
            <person name="Touchon M."/>
            <person name="Hoede C."/>
            <person name="Tenaillon O."/>
            <person name="Barbe V."/>
            <person name="Baeriswyl S."/>
            <person name="Bidet P."/>
            <person name="Bingen E."/>
            <person name="Bonacorsi S."/>
            <person name="Bouchier C."/>
            <person name="Bouvet O."/>
            <person name="Calteau A."/>
            <person name="Chiapello H."/>
            <person name="Clermont O."/>
            <person name="Cruveiller S."/>
            <person name="Danchin A."/>
            <person name="Diard M."/>
            <person name="Dossat C."/>
            <person name="Karoui M.E."/>
            <person name="Frapy E."/>
            <person name="Garry L."/>
            <person name="Ghigo J.M."/>
            <person name="Gilles A.M."/>
            <person name="Johnson J."/>
            <person name="Le Bouguenec C."/>
            <person name="Lescat M."/>
            <person name="Mangenot S."/>
            <person name="Martinez-Jehanne V."/>
            <person name="Matic I."/>
            <person name="Nassif X."/>
            <person name="Oztas S."/>
            <person name="Petit M.A."/>
            <person name="Pichon C."/>
            <person name="Rouy Z."/>
            <person name="Ruf C.S."/>
            <person name="Schneider D."/>
            <person name="Tourret J."/>
            <person name="Vacherie B."/>
            <person name="Vallenet D."/>
            <person name="Medigue C."/>
            <person name="Rocha E.P.C."/>
            <person name="Denamur E."/>
        </authorList>
    </citation>
    <scope>NUCLEOTIDE SEQUENCE [LARGE SCALE GENOMIC DNA]</scope>
    <source>
        <strain>IAI39 / ExPEC</strain>
    </source>
</reference>
<feature type="chain" id="PRO_1000145810" description="Non-specific ribonucleoside hydrolase RihC">
    <location>
        <begin position="1"/>
        <end position="304"/>
    </location>
</feature>
<feature type="active site" evidence="1">
    <location>
        <position position="233"/>
    </location>
</feature>
<organism>
    <name type="scientific">Escherichia coli O7:K1 (strain IAI39 / ExPEC)</name>
    <dbReference type="NCBI Taxonomy" id="585057"/>
    <lineage>
        <taxon>Bacteria</taxon>
        <taxon>Pseudomonadati</taxon>
        <taxon>Pseudomonadota</taxon>
        <taxon>Gammaproteobacteria</taxon>
        <taxon>Enterobacterales</taxon>
        <taxon>Enterobacteriaceae</taxon>
        <taxon>Escherichia</taxon>
    </lineage>
</organism>